<reference key="1">
    <citation type="journal article" date="2011" name="J. Bacteriol.">
        <title>Complete genome sequence of the Thermophilic Bacterium Exiguobacterium sp. AT1b.</title>
        <authorList>
            <person name="Vishnivetskaya T.A."/>
            <person name="Lucas S."/>
            <person name="Copeland A."/>
            <person name="Lapidus A."/>
            <person name="Glavina del Rio T."/>
            <person name="Dalin E."/>
            <person name="Tice H."/>
            <person name="Bruce D.C."/>
            <person name="Goodwin L.A."/>
            <person name="Pitluck S."/>
            <person name="Saunders E."/>
            <person name="Brettin T."/>
            <person name="Detter C."/>
            <person name="Han C."/>
            <person name="Larimer F."/>
            <person name="Land M.L."/>
            <person name="Hauser L.J."/>
            <person name="Kyrpides N.C."/>
            <person name="Ovchinnikova G."/>
            <person name="Kathariou S."/>
            <person name="Ramaley R.F."/>
            <person name="Rodrigues D.F."/>
            <person name="Hendrix C."/>
            <person name="Richardson P."/>
            <person name="Tiedje J.M."/>
        </authorList>
    </citation>
    <scope>NUCLEOTIDE SEQUENCE [LARGE SCALE GENOMIC DNA]</scope>
    <source>
        <strain>ATCC BAA-1283 / AT1b</strain>
    </source>
</reference>
<accession>C4KZN9</accession>
<gene>
    <name evidence="1" type="primary">rplP</name>
    <name type="ordered locus">EAT1b_1626</name>
</gene>
<organism>
    <name type="scientific">Exiguobacterium sp. (strain ATCC BAA-1283 / AT1b)</name>
    <dbReference type="NCBI Taxonomy" id="360911"/>
    <lineage>
        <taxon>Bacteria</taxon>
        <taxon>Bacillati</taxon>
        <taxon>Bacillota</taxon>
        <taxon>Bacilli</taxon>
        <taxon>Bacillales</taxon>
        <taxon>Bacillales Family XII. Incertae Sedis</taxon>
        <taxon>Exiguobacterium</taxon>
    </lineage>
</organism>
<evidence type="ECO:0000255" key="1">
    <source>
        <dbReference type="HAMAP-Rule" id="MF_01342"/>
    </source>
</evidence>
<evidence type="ECO:0000305" key="2"/>
<comment type="function">
    <text evidence="1">Binds 23S rRNA and is also seen to make contacts with the A and possibly P site tRNAs.</text>
</comment>
<comment type="subunit">
    <text evidence="1">Part of the 50S ribosomal subunit.</text>
</comment>
<comment type="similarity">
    <text evidence="1">Belongs to the universal ribosomal protein uL16 family.</text>
</comment>
<name>RL16_EXISA</name>
<protein>
    <recommendedName>
        <fullName evidence="1">Large ribosomal subunit protein uL16</fullName>
    </recommendedName>
    <alternativeName>
        <fullName evidence="2">50S ribosomal protein L16</fullName>
    </alternativeName>
</protein>
<keyword id="KW-0687">Ribonucleoprotein</keyword>
<keyword id="KW-0689">Ribosomal protein</keyword>
<keyword id="KW-0694">RNA-binding</keyword>
<keyword id="KW-0699">rRNA-binding</keyword>
<keyword id="KW-0820">tRNA-binding</keyword>
<sequence>MLLPKRVKYRRVHRGKMRGNAKRGTTVHFGEFGLQALEASWITNRQIESARIAMTRYMKRGGKVWIKIFPHKPYTKKPLEVRMGSGKGAPEGWVAVVKPGKVMFEIAGVSEEVAREALRLASHKLPVKCKFVKREENGGDTNESN</sequence>
<dbReference type="EMBL" id="CP001615">
    <property type="protein sequence ID" value="ACQ70552.1"/>
    <property type="molecule type" value="Genomic_DNA"/>
</dbReference>
<dbReference type="RefSeq" id="WP_012727670.1">
    <property type="nucleotide sequence ID" value="NZ_MOEL01000001.1"/>
</dbReference>
<dbReference type="SMR" id="C4KZN9"/>
<dbReference type="STRING" id="360911.EAT1b_1626"/>
<dbReference type="GeneID" id="94370750"/>
<dbReference type="KEGG" id="eat:EAT1b_1626"/>
<dbReference type="eggNOG" id="COG0197">
    <property type="taxonomic scope" value="Bacteria"/>
</dbReference>
<dbReference type="HOGENOM" id="CLU_078858_2_1_9"/>
<dbReference type="OrthoDB" id="9802589at2"/>
<dbReference type="Proteomes" id="UP000000716">
    <property type="component" value="Chromosome"/>
</dbReference>
<dbReference type="GO" id="GO:0022625">
    <property type="term" value="C:cytosolic large ribosomal subunit"/>
    <property type="evidence" value="ECO:0007669"/>
    <property type="project" value="TreeGrafter"/>
</dbReference>
<dbReference type="GO" id="GO:0019843">
    <property type="term" value="F:rRNA binding"/>
    <property type="evidence" value="ECO:0007669"/>
    <property type="project" value="UniProtKB-UniRule"/>
</dbReference>
<dbReference type="GO" id="GO:0003735">
    <property type="term" value="F:structural constituent of ribosome"/>
    <property type="evidence" value="ECO:0007669"/>
    <property type="project" value="InterPro"/>
</dbReference>
<dbReference type="GO" id="GO:0000049">
    <property type="term" value="F:tRNA binding"/>
    <property type="evidence" value="ECO:0007669"/>
    <property type="project" value="UniProtKB-KW"/>
</dbReference>
<dbReference type="GO" id="GO:0006412">
    <property type="term" value="P:translation"/>
    <property type="evidence" value="ECO:0007669"/>
    <property type="project" value="UniProtKB-UniRule"/>
</dbReference>
<dbReference type="CDD" id="cd01433">
    <property type="entry name" value="Ribosomal_L16_L10e"/>
    <property type="match status" value="1"/>
</dbReference>
<dbReference type="FunFam" id="3.90.1170.10:FF:000001">
    <property type="entry name" value="50S ribosomal protein L16"/>
    <property type="match status" value="1"/>
</dbReference>
<dbReference type="Gene3D" id="3.90.1170.10">
    <property type="entry name" value="Ribosomal protein L10e/L16"/>
    <property type="match status" value="1"/>
</dbReference>
<dbReference type="HAMAP" id="MF_01342">
    <property type="entry name" value="Ribosomal_uL16"/>
    <property type="match status" value="1"/>
</dbReference>
<dbReference type="InterPro" id="IPR047873">
    <property type="entry name" value="Ribosomal_uL16"/>
</dbReference>
<dbReference type="InterPro" id="IPR000114">
    <property type="entry name" value="Ribosomal_uL16_bact-type"/>
</dbReference>
<dbReference type="InterPro" id="IPR020798">
    <property type="entry name" value="Ribosomal_uL16_CS"/>
</dbReference>
<dbReference type="InterPro" id="IPR016180">
    <property type="entry name" value="Ribosomal_uL16_dom"/>
</dbReference>
<dbReference type="InterPro" id="IPR036920">
    <property type="entry name" value="Ribosomal_uL16_sf"/>
</dbReference>
<dbReference type="NCBIfam" id="TIGR01164">
    <property type="entry name" value="rplP_bact"/>
    <property type="match status" value="1"/>
</dbReference>
<dbReference type="PANTHER" id="PTHR12220">
    <property type="entry name" value="50S/60S RIBOSOMAL PROTEIN L16"/>
    <property type="match status" value="1"/>
</dbReference>
<dbReference type="PANTHER" id="PTHR12220:SF13">
    <property type="entry name" value="LARGE RIBOSOMAL SUBUNIT PROTEIN UL16M"/>
    <property type="match status" value="1"/>
</dbReference>
<dbReference type="Pfam" id="PF00252">
    <property type="entry name" value="Ribosomal_L16"/>
    <property type="match status" value="1"/>
</dbReference>
<dbReference type="PRINTS" id="PR00060">
    <property type="entry name" value="RIBOSOMALL16"/>
</dbReference>
<dbReference type="SUPFAM" id="SSF54686">
    <property type="entry name" value="Ribosomal protein L16p/L10e"/>
    <property type="match status" value="1"/>
</dbReference>
<dbReference type="PROSITE" id="PS00586">
    <property type="entry name" value="RIBOSOMAL_L16_1"/>
    <property type="match status" value="1"/>
</dbReference>
<dbReference type="PROSITE" id="PS00701">
    <property type="entry name" value="RIBOSOMAL_L16_2"/>
    <property type="match status" value="1"/>
</dbReference>
<feature type="chain" id="PRO_1000214732" description="Large ribosomal subunit protein uL16">
    <location>
        <begin position="1"/>
        <end position="145"/>
    </location>
</feature>
<proteinExistence type="inferred from homology"/>